<sequence>MNLIPTVIEQTNRGERAYDIYSRLLKDRIIMLGSAIDDNVANSIVSQLLFLAAEDPEKEISLYINSPGGSITAGMAIYDTMQFIKPKVSTICIGMAASMGAFLLAAGEKGKRYALPNSEVMIHQPLGGAQGQATEIEIAAKRILLLRDKLNKVLAERTGQPLEVIERDTDRDNFKSAEEALEYGLIDKILTHTEDKK</sequence>
<accession>P80244</accession>
<accession>O08433</accession>
<protein>
    <recommendedName>
        <fullName evidence="1">ATP-dependent Clp protease proteolytic subunit</fullName>
        <ecNumber evidence="1 5">3.4.21.92</ecNumber>
    </recommendedName>
    <alternativeName>
        <fullName>Caseinolytic protease</fullName>
    </alternativeName>
    <alternativeName>
        <fullName evidence="1">Endopeptidase Clp</fullName>
    </alternativeName>
    <alternativeName>
        <fullName>Stress protein G7</fullName>
    </alternativeName>
</protein>
<evidence type="ECO:0000255" key="1">
    <source>
        <dbReference type="HAMAP-Rule" id="MF_00444"/>
    </source>
</evidence>
<evidence type="ECO:0000269" key="2">
    <source>
    </source>
</evidence>
<evidence type="ECO:0000269" key="3">
    <source>
    </source>
</evidence>
<evidence type="ECO:0000269" key="4">
    <source>
    </source>
</evidence>
<evidence type="ECO:0000269" key="5">
    <source>
    </source>
</evidence>
<evidence type="ECO:0000269" key="6">
    <source>
    </source>
</evidence>
<evidence type="ECO:0000269" key="7">
    <source>
    </source>
</evidence>
<evidence type="ECO:0000269" key="8">
    <source>
    </source>
</evidence>
<evidence type="ECO:0000269" key="9">
    <source>
    </source>
</evidence>
<evidence type="ECO:0000305" key="10">
    <source>
    </source>
</evidence>
<evidence type="ECO:0007744" key="11">
    <source>
        <dbReference type="PDB" id="3KTG"/>
    </source>
</evidence>
<evidence type="ECO:0007744" key="12">
    <source>
        <dbReference type="PDB" id="3KTH"/>
    </source>
</evidence>
<evidence type="ECO:0007744" key="13">
    <source>
        <dbReference type="PDB" id="3KTI"/>
    </source>
</evidence>
<evidence type="ECO:0007744" key="14">
    <source>
        <dbReference type="PDB" id="3KTJ"/>
    </source>
</evidence>
<evidence type="ECO:0007744" key="15">
    <source>
        <dbReference type="PDB" id="3KTK"/>
    </source>
</evidence>
<evidence type="ECO:0007744" key="16">
    <source>
        <dbReference type="PDB" id="3TT6"/>
    </source>
</evidence>
<evidence type="ECO:0007744" key="17">
    <source>
        <dbReference type="PDB" id="3TT7"/>
    </source>
</evidence>
<evidence type="ECO:0007829" key="18">
    <source>
        <dbReference type="PDB" id="3KTI"/>
    </source>
</evidence>
<evidence type="ECO:0007829" key="19">
    <source>
        <dbReference type="PDB" id="3KTK"/>
    </source>
</evidence>
<evidence type="ECO:0007829" key="20">
    <source>
        <dbReference type="PDB" id="7FEP"/>
    </source>
</evidence>
<evidence type="ECO:0007829" key="21">
    <source>
        <dbReference type="PDB" id="7FER"/>
    </source>
</evidence>
<proteinExistence type="evidence at protein level"/>
<feature type="chain" id="PRO_0000179501" description="ATP-dependent Clp protease proteolytic subunit">
    <location>
        <begin position="1"/>
        <end position="197"/>
    </location>
</feature>
<feature type="active site" description="Nucleophile" evidence="1 10">
    <location>
        <position position="98"/>
    </location>
</feature>
<feature type="active site" evidence="1 10">
    <location>
        <position position="123"/>
    </location>
</feature>
<feature type="mutagenesis site" description="Protein no longer oligomerizes, loss of protease activity." evidence="5">
    <original>I</original>
    <variation>C</variation>
    <variation>S</variation>
    <location>
        <position position="20"/>
    </location>
</feature>
<feature type="mutagenesis site" description="Protein no longer oligomerizes, loss of protease activity." evidence="5">
    <original>L</original>
    <variation>S</variation>
    <location>
        <position position="25"/>
    </location>
</feature>
<feature type="mutagenesis site" description="Has peptidase but not protease activity, activated by ADEP antibiotics." evidence="5">
    <original>S</original>
    <variation>C</variation>
    <location>
        <position position="46"/>
    </location>
</feature>
<feature type="mutagenesis site" description="Protein no longer oligomerizes, loss of protease activity, activated by ADEP antibiotics." evidence="5">
    <original>F</original>
    <variation>S</variation>
    <location>
        <position position="50"/>
    </location>
</feature>
<feature type="mutagenesis site" description="Has peptidase but not protease activity, activated by ADEP antibiotics." evidence="5">
    <original>E</original>
    <variation>R</variation>
    <location>
        <position position="54"/>
    </location>
</feature>
<feature type="mutagenesis site" description="Has peptidase but not protease activity, partially activated by ADEP antibiotics." evidence="5">
    <original>Y</original>
    <variation>A</variation>
    <location>
        <position position="63"/>
    </location>
</feature>
<feature type="mutagenesis site" description="Has peptidase but not protease activity." evidence="5">
    <original>Y</original>
    <variation>W</variation>
    <location>
        <position position="63"/>
    </location>
</feature>
<feature type="mutagenesis site" description="Has peptidase but not protease activity." evidence="5">
    <original>F</original>
    <variation>A</variation>
    <location>
        <position position="83"/>
    </location>
</feature>
<feature type="strand" evidence="20">
    <location>
        <begin position="6"/>
        <end position="9"/>
    </location>
</feature>
<feature type="strand" evidence="20">
    <location>
        <begin position="11"/>
        <end position="13"/>
    </location>
</feature>
<feature type="strand" evidence="20">
    <location>
        <begin position="16"/>
        <end position="19"/>
    </location>
</feature>
<feature type="helix" evidence="18">
    <location>
        <begin position="20"/>
        <end position="26"/>
    </location>
</feature>
<feature type="strand" evidence="18">
    <location>
        <begin position="29"/>
        <end position="32"/>
    </location>
</feature>
<feature type="helix" evidence="18">
    <location>
        <begin position="38"/>
        <end position="54"/>
    </location>
</feature>
<feature type="strand" evidence="18">
    <location>
        <begin position="56"/>
        <end position="58"/>
    </location>
</feature>
<feature type="strand" evidence="18">
    <location>
        <begin position="60"/>
        <end position="66"/>
    </location>
</feature>
<feature type="helix" evidence="18">
    <location>
        <begin position="71"/>
        <end position="83"/>
    </location>
</feature>
<feature type="strand" evidence="18">
    <location>
        <begin position="84"/>
        <end position="86"/>
    </location>
</feature>
<feature type="strand" evidence="18">
    <location>
        <begin position="88"/>
        <end position="97"/>
    </location>
</feature>
<feature type="helix" evidence="18">
    <location>
        <begin position="99"/>
        <end position="105"/>
    </location>
</feature>
<feature type="strand" evidence="18">
    <location>
        <begin position="112"/>
        <end position="114"/>
    </location>
</feature>
<feature type="strand" evidence="18">
    <location>
        <begin position="119"/>
        <end position="122"/>
    </location>
</feature>
<feature type="strand" evidence="19">
    <location>
        <begin position="126"/>
        <end position="132"/>
    </location>
</feature>
<feature type="helix" evidence="18">
    <location>
        <begin position="133"/>
        <end position="158"/>
    </location>
</feature>
<feature type="helix" evidence="18">
    <location>
        <begin position="162"/>
        <end position="168"/>
    </location>
</feature>
<feature type="strand" evidence="21">
    <location>
        <begin position="169"/>
        <end position="171"/>
    </location>
</feature>
<feature type="strand" evidence="18">
    <location>
        <begin position="173"/>
        <end position="176"/>
    </location>
</feature>
<feature type="helix" evidence="18">
    <location>
        <begin position="177"/>
        <end position="183"/>
    </location>
</feature>
<feature type="strand" evidence="18">
    <location>
        <begin position="187"/>
        <end position="189"/>
    </location>
</feature>
<reference key="1">
    <citation type="journal article" date="1998" name="Mol. Microbiol.">
        <title>Stress induction of the Bacillus subtilis clpP gene encoding a homologue of the proteolytic component of the Clp protease and the involvement of ClpP and ClpX in stress tolerance.</title>
        <authorList>
            <person name="Gerth U."/>
            <person name="Kruger E."/>
            <person name="Derre I."/>
            <person name="Msadek T."/>
            <person name="Hecker M."/>
        </authorList>
    </citation>
    <scope>NUCLEOTIDE SEQUENCE [GENOMIC DNA]</scope>
    <scope>INDUCTION BY STRESS</scope>
</reference>
<reference key="2">
    <citation type="submission" date="1997-04" db="EMBL/GenBank/DDBJ databases">
        <authorList>
            <person name="Denizot F."/>
        </authorList>
    </citation>
    <scope>NUCLEOTIDE SEQUENCE [GENOMIC DNA]</scope>
    <source>
        <strain>168</strain>
    </source>
</reference>
<reference key="3">
    <citation type="journal article" date="1997" name="Nature">
        <title>The complete genome sequence of the Gram-positive bacterium Bacillus subtilis.</title>
        <authorList>
            <person name="Kunst F."/>
            <person name="Ogasawara N."/>
            <person name="Moszer I."/>
            <person name="Albertini A.M."/>
            <person name="Alloni G."/>
            <person name="Azevedo V."/>
            <person name="Bertero M.G."/>
            <person name="Bessieres P."/>
            <person name="Bolotin A."/>
            <person name="Borchert S."/>
            <person name="Borriss R."/>
            <person name="Boursier L."/>
            <person name="Brans A."/>
            <person name="Braun M."/>
            <person name="Brignell S.C."/>
            <person name="Bron S."/>
            <person name="Brouillet S."/>
            <person name="Bruschi C.V."/>
            <person name="Caldwell B."/>
            <person name="Capuano V."/>
            <person name="Carter N.M."/>
            <person name="Choi S.-K."/>
            <person name="Codani J.-J."/>
            <person name="Connerton I.F."/>
            <person name="Cummings N.J."/>
            <person name="Daniel R.A."/>
            <person name="Denizot F."/>
            <person name="Devine K.M."/>
            <person name="Duesterhoeft A."/>
            <person name="Ehrlich S.D."/>
            <person name="Emmerson P.T."/>
            <person name="Entian K.-D."/>
            <person name="Errington J."/>
            <person name="Fabret C."/>
            <person name="Ferrari E."/>
            <person name="Foulger D."/>
            <person name="Fritz C."/>
            <person name="Fujita M."/>
            <person name="Fujita Y."/>
            <person name="Fuma S."/>
            <person name="Galizzi A."/>
            <person name="Galleron N."/>
            <person name="Ghim S.-Y."/>
            <person name="Glaser P."/>
            <person name="Goffeau A."/>
            <person name="Golightly E.J."/>
            <person name="Grandi G."/>
            <person name="Guiseppi G."/>
            <person name="Guy B.J."/>
            <person name="Haga K."/>
            <person name="Haiech J."/>
            <person name="Harwood C.R."/>
            <person name="Henaut A."/>
            <person name="Hilbert H."/>
            <person name="Holsappel S."/>
            <person name="Hosono S."/>
            <person name="Hullo M.-F."/>
            <person name="Itaya M."/>
            <person name="Jones L.-M."/>
            <person name="Joris B."/>
            <person name="Karamata D."/>
            <person name="Kasahara Y."/>
            <person name="Klaerr-Blanchard M."/>
            <person name="Klein C."/>
            <person name="Kobayashi Y."/>
            <person name="Koetter P."/>
            <person name="Koningstein G."/>
            <person name="Krogh S."/>
            <person name="Kumano M."/>
            <person name="Kurita K."/>
            <person name="Lapidus A."/>
            <person name="Lardinois S."/>
            <person name="Lauber J."/>
            <person name="Lazarevic V."/>
            <person name="Lee S.-M."/>
            <person name="Levine A."/>
            <person name="Liu H."/>
            <person name="Masuda S."/>
            <person name="Mauel C."/>
            <person name="Medigue C."/>
            <person name="Medina N."/>
            <person name="Mellado R.P."/>
            <person name="Mizuno M."/>
            <person name="Moestl D."/>
            <person name="Nakai S."/>
            <person name="Noback M."/>
            <person name="Noone D."/>
            <person name="O'Reilly M."/>
            <person name="Ogawa K."/>
            <person name="Ogiwara A."/>
            <person name="Oudega B."/>
            <person name="Park S.-H."/>
            <person name="Parro V."/>
            <person name="Pohl T.M."/>
            <person name="Portetelle D."/>
            <person name="Porwollik S."/>
            <person name="Prescott A.M."/>
            <person name="Presecan E."/>
            <person name="Pujic P."/>
            <person name="Purnelle B."/>
            <person name="Rapoport G."/>
            <person name="Rey M."/>
            <person name="Reynolds S."/>
            <person name="Rieger M."/>
            <person name="Rivolta C."/>
            <person name="Rocha E."/>
            <person name="Roche B."/>
            <person name="Rose M."/>
            <person name="Sadaie Y."/>
            <person name="Sato T."/>
            <person name="Scanlan E."/>
            <person name="Schleich S."/>
            <person name="Schroeter R."/>
            <person name="Scoffone F."/>
            <person name="Sekiguchi J."/>
            <person name="Sekowska A."/>
            <person name="Seror S.J."/>
            <person name="Serror P."/>
            <person name="Shin B.-S."/>
            <person name="Soldo B."/>
            <person name="Sorokin A."/>
            <person name="Tacconi E."/>
            <person name="Takagi T."/>
            <person name="Takahashi H."/>
            <person name="Takemaru K."/>
            <person name="Takeuchi M."/>
            <person name="Tamakoshi A."/>
            <person name="Tanaka T."/>
            <person name="Terpstra P."/>
            <person name="Tognoni A."/>
            <person name="Tosato V."/>
            <person name="Uchiyama S."/>
            <person name="Vandenbol M."/>
            <person name="Vannier F."/>
            <person name="Vassarotti A."/>
            <person name="Viari A."/>
            <person name="Wambutt R."/>
            <person name="Wedler E."/>
            <person name="Wedler H."/>
            <person name="Weitzenegger T."/>
            <person name="Winters P."/>
            <person name="Wipat A."/>
            <person name="Yamamoto H."/>
            <person name="Yamane K."/>
            <person name="Yasumoto K."/>
            <person name="Yata K."/>
            <person name="Yoshida K."/>
            <person name="Yoshikawa H.-F."/>
            <person name="Zumstein E."/>
            <person name="Yoshikawa H."/>
            <person name="Danchin A."/>
        </authorList>
    </citation>
    <scope>NUCLEOTIDE SEQUENCE [LARGE SCALE GENOMIC DNA]</scope>
    <source>
        <strain>168</strain>
    </source>
</reference>
<reference key="4">
    <citation type="journal article" date="1994" name="Microbiology">
        <title>Analysis of the induction of general stress proteins of Bacillus subtilis.</title>
        <authorList>
            <person name="Voelker U."/>
            <person name="Engelmann S."/>
            <person name="Maul B."/>
            <person name="Riethdorf S."/>
            <person name="Voelker A."/>
            <person name="Schmid R."/>
            <person name="Mach H."/>
            <person name="Hecker M."/>
        </authorList>
    </citation>
    <scope>PROTEIN SEQUENCE OF 1-24</scope>
    <scope>INDUCTION BY STRESS</scope>
    <source>
        <strain>168 / IS58</strain>
    </source>
</reference>
<reference key="5">
    <citation type="journal article" date="1992" name="J. Gen. Microbiol.">
        <title>Stress proteins and cross-protection by heat shock and salt stress in Bacillus subtilis.</title>
        <authorList>
            <person name="Voelker U."/>
            <person name="Mach H."/>
            <person name="Schmid R."/>
            <person name="Hecker M."/>
        </authorList>
    </citation>
    <scope>PROTEIN SEQUENCE OF 1-21</scope>
    <scope>INDUCTION BY STRESS</scope>
    <source>
        <strain>168 / IS58</strain>
    </source>
</reference>
<reference key="6">
    <citation type="journal article" date="2001" name="J. Bacteriol.">
        <title>SsrA-mediated tagging in Bacillus subtilis.</title>
        <authorList>
            <person name="Wiegert T."/>
            <person name="Schumann W."/>
        </authorList>
    </citation>
    <scope>FUNCTION</scope>
    <scope>DISRUPTION PHENOTYPE</scope>
    <source>
        <strain>168 / Marburg / 1012</strain>
    </source>
</reference>
<reference key="7">
    <citation type="journal article" date="2006" name="Mol. Microbiol.">
        <title>Involvement of Clp protease activity in modulating the Bacillus subtilis sigma-W stress response.</title>
        <authorList>
            <person name="Zellmeier S."/>
            <person name="Schumann W."/>
            <person name="Wiegert T."/>
        </authorList>
    </citation>
    <scope>FUNCTION IN RSIW DEGRADATION</scope>
</reference>
<reference key="8">
    <citation type="journal article" date="2019" name="Cell">
        <title>Alanine Tails Signal Proteolysis in Bacterial Ribosome-Associated Quality Control.</title>
        <authorList>
            <person name="Lytvynenko I."/>
            <person name="Paternoga H."/>
            <person name="Thrun A."/>
            <person name="Balke A."/>
            <person name="Mueller T.A."/>
            <person name="Chiang C.H."/>
            <person name="Nagler K."/>
            <person name="Tsaprailis G."/>
            <person name="Anders S."/>
            <person name="Bischofs I."/>
            <person name="Maupin-Furlow J.A."/>
            <person name="Spahn C.M.T."/>
            <person name="Joazeiro C.A.P."/>
        </authorList>
    </citation>
    <scope>FUNCTION</scope>
    <scope>ACTIVITY REGULATION</scope>
    <scope>DISRUPTION PHENOTYPE</scope>
    <source>
        <strain>168 / 1A700</strain>
    </source>
</reference>
<reference evidence="11 12 13 14 15" key="9">
    <citation type="journal article" date="2010" name="Nat. Struct. Mol. Biol.">
        <title>Structures of ClpP in complex with acyldepsipeptide antibiotics reveal its activation mechanism.</title>
        <authorList>
            <person name="Lee B.G."/>
            <person name="Park E.Y."/>
            <person name="Lee K.E."/>
            <person name="Jeon H."/>
            <person name="Sung K.H."/>
            <person name="Paulsen H."/>
            <person name="Rubsamen-Schaeff H."/>
            <person name="Brotz-Oesterhelt H."/>
            <person name="Song H.K."/>
        </authorList>
    </citation>
    <scope>X-RAY CRYSTALLOGRAPHY (2.00 ANGSTROMS) OF 2-197 ALONE AND IN COMPLEX WITH ANTIBIOTICS</scope>
    <scope>FUNCTION</scope>
    <scope>CATALYTIC ACTIVITY</scope>
    <scope>SUBUNIT</scope>
    <scope>MUTAGENESIS OF ILE-20; LEU-25; SER-46; PHE-50; GLU-54; TYR-63 AND PHE-83</scope>
</reference>
<reference evidence="16 17" key="10">
    <citation type="journal article" date="2011" name="Mol. Cells">
        <title>Structural insights into the conformational diversity of ClpP from Bacillus subtilis.</title>
        <authorList>
            <person name="Lee B.G."/>
            <person name="Kim M.K."/>
            <person name="Song H.K."/>
        </authorList>
    </citation>
    <scope>X-RAY CRYSTALLOGRAPHY (2.56 ANGSTROMS) IN COMPRESSED FORM AND IN COMPLEX WITH ANTIBIOTIC</scope>
    <scope>ACTIVITY REGULATION</scope>
    <scope>ACTIVE SITE</scope>
    <scope>SUBUNIT</scope>
    <scope>DOMAIN</scope>
</reference>
<name>CLPP_BACSU</name>
<gene>
    <name evidence="1" type="primary">clpP</name>
    <name type="synonym">yvdN</name>
    <name type="ordered locus">BSU34540</name>
</gene>
<keyword id="KW-0002">3D-structure</keyword>
<keyword id="KW-0963">Cytoplasm</keyword>
<keyword id="KW-0903">Direct protein sequencing</keyword>
<keyword id="KW-0378">Hydrolase</keyword>
<keyword id="KW-0645">Protease</keyword>
<keyword id="KW-1185">Reference proteome</keyword>
<keyword id="KW-0720">Serine protease</keyword>
<keyword id="KW-0346">Stress response</keyword>
<dbReference type="EC" id="3.4.21.92" evidence="1 5"/>
<dbReference type="EMBL" id="U59754">
    <property type="protein sequence ID" value="AAC46381.1"/>
    <property type="molecule type" value="Genomic_DNA"/>
</dbReference>
<dbReference type="EMBL" id="Z94043">
    <property type="protein sequence ID" value="CAB08043.1"/>
    <property type="molecule type" value="Genomic_DNA"/>
</dbReference>
<dbReference type="EMBL" id="AL009126">
    <property type="protein sequence ID" value="CAB15459.1"/>
    <property type="molecule type" value="Genomic_DNA"/>
</dbReference>
<dbReference type="PIR" id="B69601">
    <property type="entry name" value="B69601"/>
</dbReference>
<dbReference type="RefSeq" id="NP_391334.1">
    <property type="nucleotide sequence ID" value="NC_000964.3"/>
</dbReference>
<dbReference type="RefSeq" id="WP_003228214.1">
    <property type="nucleotide sequence ID" value="NZ_OZ025638.1"/>
</dbReference>
<dbReference type="PDB" id="3KTG">
    <property type="method" value="X-ray"/>
    <property type="resolution" value="2.40 A"/>
    <property type="chains" value="A/B/C/D/E/F/G=2-197"/>
</dbReference>
<dbReference type="PDB" id="3KTH">
    <property type="method" value="X-ray"/>
    <property type="resolution" value="3.00 A"/>
    <property type="chains" value="A/B/C/D/E/F/G=2-197"/>
</dbReference>
<dbReference type="PDB" id="3KTI">
    <property type="method" value="X-ray"/>
    <property type="resolution" value="2.00 A"/>
    <property type="chains" value="A/B/C/D/E/F/G=2-197"/>
</dbReference>
<dbReference type="PDB" id="3KTJ">
    <property type="method" value="X-ray"/>
    <property type="resolution" value="2.60 A"/>
    <property type="chains" value="A/B/C/D/E/F/G=2-197"/>
</dbReference>
<dbReference type="PDB" id="3KTK">
    <property type="method" value="X-ray"/>
    <property type="resolution" value="2.60 A"/>
    <property type="chains" value="A/B/C/D/E/F/G/H/I/J/K/L/M/N=2-197"/>
</dbReference>
<dbReference type="PDB" id="3TT6">
    <property type="method" value="X-ray"/>
    <property type="resolution" value="2.59 A"/>
    <property type="chains" value="A/B/C/D/E/F/G=2-197"/>
</dbReference>
<dbReference type="PDB" id="3TT7">
    <property type="method" value="X-ray"/>
    <property type="resolution" value="2.56 A"/>
    <property type="chains" value="A/B/C/D/E/F/G=1-197"/>
</dbReference>
<dbReference type="PDB" id="7FEP">
    <property type="method" value="EM"/>
    <property type="resolution" value="3.10 A"/>
    <property type="chains" value="A/B/C/D/E/F/G/H/I/J/K/L/M/N=2-197"/>
</dbReference>
<dbReference type="PDB" id="7FEQ">
    <property type="method" value="EM"/>
    <property type="resolution" value="3.20 A"/>
    <property type="chains" value="A/B/C/D/E/F/G/H/I/J/K/L/M/N=2-197"/>
</dbReference>
<dbReference type="PDB" id="7FER">
    <property type="method" value="EM"/>
    <property type="resolution" value="3.40 A"/>
    <property type="chains" value="A/B/C/D/E/F/G/H/I/J/K/L/M/N=2-197"/>
</dbReference>
<dbReference type="PDB" id="7FES">
    <property type="method" value="EM"/>
    <property type="resolution" value="3.40 A"/>
    <property type="chains" value="A/B/C/D/E/F/G/H/I/J/K/L/M/N=2-197"/>
</dbReference>
<dbReference type="PDB" id="7P80">
    <property type="method" value="X-ray"/>
    <property type="resolution" value="2.98 A"/>
    <property type="chains" value="A/B/C/D/E/F/G=2-192"/>
</dbReference>
<dbReference type="PDB" id="7P81">
    <property type="method" value="X-ray"/>
    <property type="resolution" value="2.79 A"/>
    <property type="chains" value="A/B/C/D/E/F/G/H/I/J/K/L/M/N/O/P/Q/R/S/T/U/V/W/X/Y/Z/a/b=2-192"/>
</dbReference>
<dbReference type="PDBsum" id="3KTG"/>
<dbReference type="PDBsum" id="3KTH"/>
<dbReference type="PDBsum" id="3KTI"/>
<dbReference type="PDBsum" id="3KTJ"/>
<dbReference type="PDBsum" id="3KTK"/>
<dbReference type="PDBsum" id="3TT6"/>
<dbReference type="PDBsum" id="3TT7"/>
<dbReference type="PDBsum" id="7FEP"/>
<dbReference type="PDBsum" id="7FEQ"/>
<dbReference type="PDBsum" id="7FER"/>
<dbReference type="PDBsum" id="7FES"/>
<dbReference type="PDBsum" id="7P80"/>
<dbReference type="PDBsum" id="7P81"/>
<dbReference type="EMDB" id="EMD-31559"/>
<dbReference type="EMDB" id="EMD-31560"/>
<dbReference type="EMDB" id="EMD-31561"/>
<dbReference type="EMDB" id="EMD-31562"/>
<dbReference type="SMR" id="P80244"/>
<dbReference type="DIP" id="DIP-43711N"/>
<dbReference type="FunCoup" id="P80244">
    <property type="interactions" value="625"/>
</dbReference>
<dbReference type="IntAct" id="P80244">
    <property type="interactions" value="1"/>
</dbReference>
<dbReference type="MINT" id="P80244"/>
<dbReference type="STRING" id="224308.BSU34540"/>
<dbReference type="ChEMBL" id="CHEMBL2146309"/>
<dbReference type="MEROPS" id="S14.001"/>
<dbReference type="jPOST" id="P80244"/>
<dbReference type="PaxDb" id="224308-BSU34540"/>
<dbReference type="EnsemblBacteria" id="CAB15459">
    <property type="protein sequence ID" value="CAB15459"/>
    <property type="gene ID" value="BSU_34540"/>
</dbReference>
<dbReference type="GeneID" id="938625"/>
<dbReference type="KEGG" id="bsu:BSU34540"/>
<dbReference type="PATRIC" id="fig|224308.179.peg.3741"/>
<dbReference type="eggNOG" id="COG0740">
    <property type="taxonomic scope" value="Bacteria"/>
</dbReference>
<dbReference type="InParanoid" id="P80244"/>
<dbReference type="OrthoDB" id="9802800at2"/>
<dbReference type="PhylomeDB" id="P80244"/>
<dbReference type="BioCyc" id="BSUB:BSU34540-MONOMER"/>
<dbReference type="BRENDA" id="3.4.21.92">
    <property type="organism ID" value="658"/>
</dbReference>
<dbReference type="EvolutionaryTrace" id="P80244"/>
<dbReference type="Proteomes" id="UP000001570">
    <property type="component" value="Chromosome"/>
</dbReference>
<dbReference type="GO" id="GO:0005737">
    <property type="term" value="C:cytoplasm"/>
    <property type="evidence" value="ECO:0007669"/>
    <property type="project" value="UniProtKB-SubCell"/>
</dbReference>
<dbReference type="GO" id="GO:0009368">
    <property type="term" value="C:endopeptidase Clp complex"/>
    <property type="evidence" value="ECO:0000318"/>
    <property type="project" value="GO_Central"/>
</dbReference>
<dbReference type="GO" id="GO:0004176">
    <property type="term" value="F:ATP-dependent peptidase activity"/>
    <property type="evidence" value="ECO:0000315"/>
    <property type="project" value="CACAO"/>
</dbReference>
<dbReference type="GO" id="GO:0051117">
    <property type="term" value="F:ATPase binding"/>
    <property type="evidence" value="ECO:0000318"/>
    <property type="project" value="GO_Central"/>
</dbReference>
<dbReference type="GO" id="GO:0042802">
    <property type="term" value="F:identical protein binding"/>
    <property type="evidence" value="ECO:0000353"/>
    <property type="project" value="IntAct"/>
</dbReference>
<dbReference type="GO" id="GO:0004252">
    <property type="term" value="F:serine-type endopeptidase activity"/>
    <property type="evidence" value="ECO:0000318"/>
    <property type="project" value="GO_Central"/>
</dbReference>
<dbReference type="GO" id="GO:0006515">
    <property type="term" value="P:protein quality control for misfolded or incompletely synthesized proteins"/>
    <property type="evidence" value="ECO:0000318"/>
    <property type="project" value="GO_Central"/>
</dbReference>
<dbReference type="CDD" id="cd07017">
    <property type="entry name" value="S14_ClpP_2"/>
    <property type="match status" value="1"/>
</dbReference>
<dbReference type="FunFam" id="3.90.226.10:FF:000001">
    <property type="entry name" value="ATP-dependent Clp protease proteolytic subunit"/>
    <property type="match status" value="1"/>
</dbReference>
<dbReference type="Gene3D" id="3.90.226.10">
    <property type="entry name" value="2-enoyl-CoA Hydratase, Chain A, domain 1"/>
    <property type="match status" value="1"/>
</dbReference>
<dbReference type="HAMAP" id="MF_00444">
    <property type="entry name" value="ClpP"/>
    <property type="match status" value="1"/>
</dbReference>
<dbReference type="InterPro" id="IPR001907">
    <property type="entry name" value="ClpP"/>
</dbReference>
<dbReference type="InterPro" id="IPR029045">
    <property type="entry name" value="ClpP/crotonase-like_dom_sf"/>
</dbReference>
<dbReference type="InterPro" id="IPR023562">
    <property type="entry name" value="ClpP/TepA"/>
</dbReference>
<dbReference type="InterPro" id="IPR033135">
    <property type="entry name" value="ClpP_His_AS"/>
</dbReference>
<dbReference type="InterPro" id="IPR018215">
    <property type="entry name" value="ClpP_Ser_AS"/>
</dbReference>
<dbReference type="NCBIfam" id="TIGR00493">
    <property type="entry name" value="clpP"/>
    <property type="match status" value="1"/>
</dbReference>
<dbReference type="NCBIfam" id="NF001368">
    <property type="entry name" value="PRK00277.1"/>
    <property type="match status" value="1"/>
</dbReference>
<dbReference type="NCBIfam" id="NF009205">
    <property type="entry name" value="PRK12553.1"/>
    <property type="match status" value="1"/>
</dbReference>
<dbReference type="PANTHER" id="PTHR10381">
    <property type="entry name" value="ATP-DEPENDENT CLP PROTEASE PROTEOLYTIC SUBUNIT"/>
    <property type="match status" value="1"/>
</dbReference>
<dbReference type="PANTHER" id="PTHR10381:SF70">
    <property type="entry name" value="ATP-DEPENDENT CLP PROTEASE PROTEOLYTIC SUBUNIT"/>
    <property type="match status" value="1"/>
</dbReference>
<dbReference type="Pfam" id="PF00574">
    <property type="entry name" value="CLP_protease"/>
    <property type="match status" value="1"/>
</dbReference>
<dbReference type="PRINTS" id="PR00127">
    <property type="entry name" value="CLPPROTEASEP"/>
</dbReference>
<dbReference type="SUPFAM" id="SSF52096">
    <property type="entry name" value="ClpP/crotonase"/>
    <property type="match status" value="1"/>
</dbReference>
<dbReference type="PROSITE" id="PS00382">
    <property type="entry name" value="CLP_PROTEASE_HIS"/>
    <property type="match status" value="1"/>
</dbReference>
<dbReference type="PROSITE" id="PS00381">
    <property type="entry name" value="CLP_PROTEASE_SER"/>
    <property type="match status" value="1"/>
</dbReference>
<organism>
    <name type="scientific">Bacillus subtilis (strain 168)</name>
    <dbReference type="NCBI Taxonomy" id="224308"/>
    <lineage>
        <taxon>Bacteria</taxon>
        <taxon>Bacillati</taxon>
        <taxon>Bacillota</taxon>
        <taxon>Bacilli</taxon>
        <taxon>Bacillales</taxon>
        <taxon>Bacillaceae</taxon>
        <taxon>Bacillus</taxon>
    </lineage>
</organism>
<comment type="function">
    <text evidence="1 2 4 5 7">Cleaves peptides in various proteins in a process that requires ATP hydrolysis. Has a limited peptidase activity in the absence of ATP-binding subunits ClpC, ClpE or ClpX (PubMed:20305655). Has a chymotrypsin-like activity. Plays a major role in the degradation of misfolded proteins (By similarity). ClpXP is involved in the complete degradation of the site-2 clipped anti-sigma-W factor RsiW. This results in the release of SigW and the transcriptional activation of genes under the control of the sigma-W factor (PubMed:16899079). Probably the major protease that degrades proteins tagged by trans-translation (PubMed:11395451, PubMed:31155236).</text>
</comment>
<comment type="catalytic activity">
    <reaction evidence="1 5">
        <text>Hydrolysis of proteins to small peptides in the presence of ATP and magnesium. alpha-casein is the usual test substrate. In the absence of ATP, only oligopeptides shorter than five residues are hydrolyzed (such as succinyl-Leu-Tyr-|-NHMec, and Leu-Tyr-Leu-|-Tyr-Trp, in which cleavage of the -Tyr-|-Leu- and -Tyr-|-Trp bonds also occurs).</text>
        <dbReference type="EC" id="3.4.21.92"/>
    </reaction>
</comment>
<comment type="activity regulation">
    <text evidence="5 6 7">Low intrinsic peptidase activity is stimulated by ATP-binding subunits ClpC, ClpE and ClpX. Activity is disregulated by acyldepsipeptides (ADEP) antibiotics, which negate the need for ATP-binding subunits for activation and which makes it into an unregulated protease. Each ClpP subunit binds 1 ADEP molecule, which prevents binding of ClpX. ADEP binding causes conformational shifts that open the gated pore of the ring (PubMed:20305655). Protease activity is inhibited by diisopropylfluoro-phosphate (PubMed:22080375). Protease activity is inhibited by bortezomib, an oncology drug originally designed to work on the human proteasome (PubMed:31155236).</text>
</comment>
<comment type="subunit">
    <text evidence="1 5 6">Fourteen ClpP subunits assemble into 2 heptameric rings which stack back to back to give a disk-like structure with a central cavity, resembling the structure of eukaryotic proteasomes (PubMed:20305655, PubMed:22080375). Forms large heterooligomeric complexes consisting of an ATPase component (ClpX, ClpC or ClpE) and a proteolytic component (ClpP) (PubMed:20305655).</text>
</comment>
<comment type="interaction">
    <interactant intactId="EBI-8165631">
        <id>P80244</id>
    </interactant>
    <interactant intactId="EBI-8165631">
        <id>P80244</id>
        <label>clpP</label>
    </interactant>
    <organismsDiffer>false</organismsDiffer>
    <experiments>4</experiments>
</comment>
<comment type="subcellular location">
    <subcellularLocation>
        <location evidence="1">Cytoplasm</location>
    </subcellularLocation>
</comment>
<comment type="induction">
    <text evidence="3 8 9">By heat shock, salt stress, ethanol stress, oxidative stress, glucose limitation and oxygen limitation.</text>
</comment>
<comment type="domain">
    <text evidence="6">Peptide exit pores open in the compressed state; in this conformation the active site residues move apart and the protease cannot be active.</text>
</comment>
<comment type="disruption phenotype">
    <text evidence="2 7">No degradation of trans-translationally tagged-peptides (PubMed:11395451, PubMed:31155236). Triple rqcH clpP ssrA mutants cannot be generated (ssrA, or tmRNA, encodes the SsrA tag added to nascent proteins in stalled ribosomes by trans-translation, targeting the nascent protein for degradation) (PubMed:31155236).</text>
</comment>
<comment type="similarity">
    <text evidence="1">Belongs to the peptidase S14 family.</text>
</comment>